<proteinExistence type="evidence at transcript level"/>
<gene>
    <name type="primary">CNN2</name>
</gene>
<feature type="initiator methionine" description="Removed" evidence="1">
    <location>
        <position position="1"/>
    </location>
</feature>
<feature type="chain" id="PRO_0000204775" description="Calponin-2">
    <location>
        <begin position="2"/>
        <end position="296" status="greater than"/>
    </location>
</feature>
<feature type="domain" description="Calponin-homology (CH)" evidence="2">
    <location>
        <begin position="28"/>
        <end position="132"/>
    </location>
</feature>
<feature type="repeat" description="Calponin-like 1">
    <location>
        <begin position="166"/>
        <end position="191"/>
    </location>
</feature>
<feature type="repeat" description="Calponin-like 2">
    <location>
        <begin position="206"/>
        <end position="231"/>
    </location>
</feature>
<feature type="repeat" description="Calponin-like 3">
    <location>
        <begin position="245"/>
        <end position="269"/>
    </location>
</feature>
<feature type="region of interest" description="Disordered" evidence="3">
    <location>
        <begin position="275"/>
        <end position="296"/>
    </location>
</feature>
<feature type="modified residue" description="N-acetylserine" evidence="1">
    <location>
        <position position="2"/>
    </location>
</feature>
<feature type="modified residue" description="N6-acetyllysine" evidence="1">
    <location>
        <position position="8"/>
    </location>
</feature>
<feature type="modified residue" description="N6-acetyllysine" evidence="1">
    <location>
        <position position="25"/>
    </location>
</feature>
<feature type="modified residue" description="Phosphoserine" evidence="1">
    <location>
        <position position="138"/>
    </location>
</feature>
<feature type="non-terminal residue">
    <location>
        <position position="296"/>
    </location>
</feature>
<evidence type="ECO:0000250" key="1">
    <source>
        <dbReference type="UniProtKB" id="Q99439"/>
    </source>
</evidence>
<evidence type="ECO:0000255" key="2">
    <source>
        <dbReference type="PROSITE-ProRule" id="PRU00044"/>
    </source>
</evidence>
<evidence type="ECO:0000256" key="3">
    <source>
        <dbReference type="SAM" id="MobiDB-lite"/>
    </source>
</evidence>
<evidence type="ECO:0000305" key="4"/>
<accession>Q08094</accession>
<reference key="1">
    <citation type="journal article" date="1993" name="FEBS Lett.">
        <title>Mammalian calponin. Identification and expression of genetic variants.</title>
        <authorList>
            <person name="Strasser P."/>
            <person name="Gimona M."/>
            <person name="Moessler H."/>
            <person name="Herzog M."/>
            <person name="Small J.V."/>
        </authorList>
    </citation>
    <scope>NUCLEOTIDE SEQUENCE [MRNA]</scope>
    <source>
        <tissue>Smooth muscle</tissue>
    </source>
</reference>
<sequence length="296" mass="32030">MSSTQFNKGPSYGLSAEVKNRLLSKYDPQKEAELRSWIEGLTGLSIGPDFQKGLKDGIILCTLMNKLQPGSVPKINRSMQNWHQLENLSNFIKAMVSYGMNPVDLFEANDLFESGNMTQVQVSLLALAGKAKTKGLQSDVDIGVKYSEKQQRNFDDATMKAGQCVIGLQMGTNKCASQSGMTAYGTRRHLYDPKNHILPPMDHSTISLQMGTNKCASQVGMTAPGTRRHIYDTKLGTDKCDNSSMSLQMGYTQGANQSGQVFGLGRQIYDPKYCPQGPAADGAPAAAGDCPGPGES</sequence>
<keyword id="KW-0007">Acetylation</keyword>
<keyword id="KW-0009">Actin-binding</keyword>
<keyword id="KW-0112">Calmodulin-binding</keyword>
<keyword id="KW-0597">Phosphoprotein</keyword>
<keyword id="KW-1185">Reference proteome</keyword>
<keyword id="KW-0677">Repeat</keyword>
<protein>
    <recommendedName>
        <fullName>Calponin-2</fullName>
    </recommendedName>
    <alternativeName>
        <fullName>Calponin H2, smooth muscle</fullName>
    </alternativeName>
    <alternativeName>
        <fullName>Neutral calponin</fullName>
    </alternativeName>
</protein>
<comment type="function">
    <text>Thin filament-associated protein that is implicated in the regulation and modulation of smooth muscle contraction. It is capable of binding to actin, calmodulin and tropomyosin. The interaction of calponin with actin inhibits the actomyosin Mg-ATPase activity.</text>
</comment>
<comment type="tissue specificity">
    <text>Smooth muscle, and tissues containing significant amounts of smooth muscle.</text>
</comment>
<comment type="similarity">
    <text evidence="4">Belongs to the calponin family.</text>
</comment>
<dbReference type="EMBL" id="Z19539">
    <property type="protein sequence ID" value="CAA79599.1"/>
    <property type="molecule type" value="mRNA"/>
</dbReference>
<dbReference type="PIR" id="S36148">
    <property type="entry name" value="S31483"/>
</dbReference>
<dbReference type="SMR" id="Q08094"/>
<dbReference type="FunCoup" id="Q08094">
    <property type="interactions" value="445"/>
</dbReference>
<dbReference type="STRING" id="9823.ENSSSCP00000044526"/>
<dbReference type="PaxDb" id="9823-ENSSSCP00000027795"/>
<dbReference type="PeptideAtlas" id="Q08094"/>
<dbReference type="eggNOG" id="KOG2046">
    <property type="taxonomic scope" value="Eukaryota"/>
</dbReference>
<dbReference type="InParanoid" id="Q08094"/>
<dbReference type="Proteomes" id="UP000008227">
    <property type="component" value="Unplaced"/>
</dbReference>
<dbReference type="Proteomes" id="UP000314985">
    <property type="component" value="Unplaced"/>
</dbReference>
<dbReference type="Proteomes" id="UP000694570">
    <property type="component" value="Unplaced"/>
</dbReference>
<dbReference type="Proteomes" id="UP000694571">
    <property type="component" value="Unplaced"/>
</dbReference>
<dbReference type="Proteomes" id="UP000694720">
    <property type="component" value="Unplaced"/>
</dbReference>
<dbReference type="Proteomes" id="UP000694722">
    <property type="component" value="Unplaced"/>
</dbReference>
<dbReference type="Proteomes" id="UP000694723">
    <property type="component" value="Unplaced"/>
</dbReference>
<dbReference type="Proteomes" id="UP000694724">
    <property type="component" value="Unplaced"/>
</dbReference>
<dbReference type="Proteomes" id="UP000694725">
    <property type="component" value="Unplaced"/>
</dbReference>
<dbReference type="Proteomes" id="UP000694726">
    <property type="component" value="Unplaced"/>
</dbReference>
<dbReference type="Proteomes" id="UP000694727">
    <property type="component" value="Unplaced"/>
</dbReference>
<dbReference type="Proteomes" id="UP000694728">
    <property type="component" value="Unplaced"/>
</dbReference>
<dbReference type="GO" id="GO:0051015">
    <property type="term" value="F:actin filament binding"/>
    <property type="evidence" value="ECO:0000318"/>
    <property type="project" value="GO_Central"/>
</dbReference>
<dbReference type="GO" id="GO:0005516">
    <property type="term" value="F:calmodulin binding"/>
    <property type="evidence" value="ECO:0007669"/>
    <property type="project" value="UniProtKB-KW"/>
</dbReference>
<dbReference type="GO" id="GO:0051764">
    <property type="term" value="P:actin crosslink formation"/>
    <property type="evidence" value="ECO:0000318"/>
    <property type="project" value="GO_Central"/>
</dbReference>
<dbReference type="GO" id="GO:0031032">
    <property type="term" value="P:actomyosin structure organization"/>
    <property type="evidence" value="ECO:0007669"/>
    <property type="project" value="InterPro"/>
</dbReference>
<dbReference type="CDD" id="cd21283">
    <property type="entry name" value="CH_CNN2"/>
    <property type="match status" value="1"/>
</dbReference>
<dbReference type="FunFam" id="1.10.418.10:FF:000040">
    <property type="entry name" value="Calponin"/>
    <property type="match status" value="1"/>
</dbReference>
<dbReference type="Gene3D" id="1.10.418.10">
    <property type="entry name" value="Calponin-like domain"/>
    <property type="match status" value="1"/>
</dbReference>
<dbReference type="InterPro" id="IPR050606">
    <property type="entry name" value="Calponin-like"/>
</dbReference>
<dbReference type="InterPro" id="IPR001997">
    <property type="entry name" value="Calponin/LIMCH1"/>
</dbReference>
<dbReference type="InterPro" id="IPR000557">
    <property type="entry name" value="Calponin_repeat"/>
</dbReference>
<dbReference type="InterPro" id="IPR001715">
    <property type="entry name" value="CH_dom"/>
</dbReference>
<dbReference type="InterPro" id="IPR036872">
    <property type="entry name" value="CH_dom_sf"/>
</dbReference>
<dbReference type="InterPro" id="IPR003096">
    <property type="entry name" value="SM22_calponin"/>
</dbReference>
<dbReference type="PANTHER" id="PTHR47385">
    <property type="entry name" value="CALPONIN"/>
    <property type="match status" value="1"/>
</dbReference>
<dbReference type="PANTHER" id="PTHR47385:SF7">
    <property type="entry name" value="CALPONIN-2"/>
    <property type="match status" value="1"/>
</dbReference>
<dbReference type="Pfam" id="PF00402">
    <property type="entry name" value="Calponin"/>
    <property type="match status" value="3"/>
</dbReference>
<dbReference type="Pfam" id="PF00307">
    <property type="entry name" value="CH"/>
    <property type="match status" value="1"/>
</dbReference>
<dbReference type="PRINTS" id="PR00889">
    <property type="entry name" value="CALPONIN"/>
</dbReference>
<dbReference type="PRINTS" id="PR00888">
    <property type="entry name" value="SM22CALPONIN"/>
</dbReference>
<dbReference type="SMART" id="SM00033">
    <property type="entry name" value="CH"/>
    <property type="match status" value="1"/>
</dbReference>
<dbReference type="SUPFAM" id="SSF47576">
    <property type="entry name" value="Calponin-homology domain, CH-domain"/>
    <property type="match status" value="1"/>
</dbReference>
<dbReference type="PROSITE" id="PS01052">
    <property type="entry name" value="CALPONIN_1"/>
    <property type="match status" value="3"/>
</dbReference>
<dbReference type="PROSITE" id="PS51122">
    <property type="entry name" value="CALPONIN_2"/>
    <property type="match status" value="3"/>
</dbReference>
<dbReference type="PROSITE" id="PS50021">
    <property type="entry name" value="CH"/>
    <property type="match status" value="1"/>
</dbReference>
<organism>
    <name type="scientific">Sus scrofa</name>
    <name type="common">Pig</name>
    <dbReference type="NCBI Taxonomy" id="9823"/>
    <lineage>
        <taxon>Eukaryota</taxon>
        <taxon>Metazoa</taxon>
        <taxon>Chordata</taxon>
        <taxon>Craniata</taxon>
        <taxon>Vertebrata</taxon>
        <taxon>Euteleostomi</taxon>
        <taxon>Mammalia</taxon>
        <taxon>Eutheria</taxon>
        <taxon>Laurasiatheria</taxon>
        <taxon>Artiodactyla</taxon>
        <taxon>Suina</taxon>
        <taxon>Suidae</taxon>
        <taxon>Sus</taxon>
    </lineage>
</organism>
<name>CNN2_PIG</name>